<keyword id="KW-0012">Acyltransferase</keyword>
<keyword id="KW-0131">Cell cycle</keyword>
<keyword id="KW-0479">Metal-binding</keyword>
<keyword id="KW-0539">Nucleus</keyword>
<keyword id="KW-1185">Reference proteome</keyword>
<keyword id="KW-0808">Transferase</keyword>
<keyword id="KW-0862">Zinc</keyword>
<keyword id="KW-0863">Zinc-finger</keyword>
<protein>
    <recommendedName>
        <fullName>N-acetyltransferase ECO1</fullName>
        <ecNumber>2.3.1.-</ecNumber>
    </recommendedName>
    <alternativeName>
        <fullName>Establishment of cohesion protein 1</fullName>
    </alternativeName>
</protein>
<proteinExistence type="inferred from homology"/>
<reference key="1">
    <citation type="journal article" date="2004" name="Nature">
        <title>Genome evolution in yeasts.</title>
        <authorList>
            <person name="Dujon B."/>
            <person name="Sherman D."/>
            <person name="Fischer G."/>
            <person name="Durrens P."/>
            <person name="Casaregola S."/>
            <person name="Lafontaine I."/>
            <person name="de Montigny J."/>
            <person name="Marck C."/>
            <person name="Neuveglise C."/>
            <person name="Talla E."/>
            <person name="Goffard N."/>
            <person name="Frangeul L."/>
            <person name="Aigle M."/>
            <person name="Anthouard V."/>
            <person name="Babour A."/>
            <person name="Barbe V."/>
            <person name="Barnay S."/>
            <person name="Blanchin S."/>
            <person name="Beckerich J.-M."/>
            <person name="Beyne E."/>
            <person name="Bleykasten C."/>
            <person name="Boisrame A."/>
            <person name="Boyer J."/>
            <person name="Cattolico L."/>
            <person name="Confanioleri F."/>
            <person name="de Daruvar A."/>
            <person name="Despons L."/>
            <person name="Fabre E."/>
            <person name="Fairhead C."/>
            <person name="Ferry-Dumazet H."/>
            <person name="Groppi A."/>
            <person name="Hantraye F."/>
            <person name="Hennequin C."/>
            <person name="Jauniaux N."/>
            <person name="Joyet P."/>
            <person name="Kachouri R."/>
            <person name="Kerrest A."/>
            <person name="Koszul R."/>
            <person name="Lemaire M."/>
            <person name="Lesur I."/>
            <person name="Ma L."/>
            <person name="Muller H."/>
            <person name="Nicaud J.-M."/>
            <person name="Nikolski M."/>
            <person name="Oztas S."/>
            <person name="Ozier-Kalogeropoulos O."/>
            <person name="Pellenz S."/>
            <person name="Potier S."/>
            <person name="Richard G.-F."/>
            <person name="Straub M.-L."/>
            <person name="Suleau A."/>
            <person name="Swennen D."/>
            <person name="Tekaia F."/>
            <person name="Wesolowski-Louvel M."/>
            <person name="Westhof E."/>
            <person name="Wirth B."/>
            <person name="Zeniou-Meyer M."/>
            <person name="Zivanovic Y."/>
            <person name="Bolotin-Fukuhara M."/>
            <person name="Thierry A."/>
            <person name="Bouchier C."/>
            <person name="Caudron B."/>
            <person name="Scarpelli C."/>
            <person name="Gaillardin C."/>
            <person name="Weissenbach J."/>
            <person name="Wincker P."/>
            <person name="Souciet J.-L."/>
        </authorList>
    </citation>
    <scope>NUCLEOTIDE SEQUENCE [LARGE SCALE GENOMIC DNA]</scope>
    <source>
        <strain>ATCC 2001 / BCRC 20586 / JCM 3761 / NBRC 0622 / NRRL Y-65 / CBS 138</strain>
    </source>
</reference>
<dbReference type="EC" id="2.3.1.-"/>
<dbReference type="EMBL" id="CR380955">
    <property type="protein sequence ID" value="CAG60576.1"/>
    <property type="molecule type" value="Genomic_DNA"/>
</dbReference>
<dbReference type="RefSeq" id="XP_447639.1">
    <property type="nucleotide sequence ID" value="XM_447639.1"/>
</dbReference>
<dbReference type="SMR" id="Q6FQ55"/>
<dbReference type="FunCoup" id="Q6FQ55">
    <property type="interactions" value="43"/>
</dbReference>
<dbReference type="STRING" id="284593.Q6FQ55"/>
<dbReference type="EnsemblFungi" id="CAGL0I09042g-T">
    <property type="protein sequence ID" value="CAGL0I09042g-T-p1"/>
    <property type="gene ID" value="CAGL0I09042g"/>
</dbReference>
<dbReference type="KEGG" id="cgr:2889020"/>
<dbReference type="CGD" id="CAL0132682">
    <property type="gene designation" value="CAGL0I09042g"/>
</dbReference>
<dbReference type="VEuPathDB" id="FungiDB:CAGL0I09042g"/>
<dbReference type="eggNOG" id="KOG3014">
    <property type="taxonomic scope" value="Eukaryota"/>
</dbReference>
<dbReference type="HOGENOM" id="CLU_039183_2_1_1"/>
<dbReference type="InParanoid" id="Q6FQ55"/>
<dbReference type="OMA" id="PSITHQE"/>
<dbReference type="Proteomes" id="UP000002428">
    <property type="component" value="Chromosome I"/>
</dbReference>
<dbReference type="GO" id="GO:0000785">
    <property type="term" value="C:chromatin"/>
    <property type="evidence" value="ECO:0007669"/>
    <property type="project" value="EnsemblFungi"/>
</dbReference>
<dbReference type="GO" id="GO:0043596">
    <property type="term" value="C:nuclear replication fork"/>
    <property type="evidence" value="ECO:0007669"/>
    <property type="project" value="EnsemblFungi"/>
</dbReference>
<dbReference type="GO" id="GO:0003682">
    <property type="term" value="F:chromatin binding"/>
    <property type="evidence" value="ECO:0007669"/>
    <property type="project" value="EnsemblFungi"/>
</dbReference>
<dbReference type="GO" id="GO:0061733">
    <property type="term" value="F:protein-lysine-acetyltransferase activity"/>
    <property type="evidence" value="ECO:0007669"/>
    <property type="project" value="TreeGrafter"/>
</dbReference>
<dbReference type="GO" id="GO:0008270">
    <property type="term" value="F:zinc ion binding"/>
    <property type="evidence" value="ECO:0007669"/>
    <property type="project" value="UniProtKB-KW"/>
</dbReference>
<dbReference type="GO" id="GO:0140588">
    <property type="term" value="P:chromatin looping"/>
    <property type="evidence" value="ECO:0007669"/>
    <property type="project" value="EnsemblFungi"/>
</dbReference>
<dbReference type="GO" id="GO:0006260">
    <property type="term" value="P:DNA replication"/>
    <property type="evidence" value="ECO:0007669"/>
    <property type="project" value="EnsemblFungi"/>
</dbReference>
<dbReference type="GO" id="GO:0006302">
    <property type="term" value="P:double-strand break repair"/>
    <property type="evidence" value="ECO:0007669"/>
    <property type="project" value="EnsemblFungi"/>
</dbReference>
<dbReference type="GO" id="GO:0034089">
    <property type="term" value="P:establishment of meiotic sister chromatid cohesion"/>
    <property type="evidence" value="ECO:0007669"/>
    <property type="project" value="EnsemblFungi"/>
</dbReference>
<dbReference type="GO" id="GO:0034087">
    <property type="term" value="P:establishment of mitotic sister chromatid cohesion"/>
    <property type="evidence" value="ECO:0007669"/>
    <property type="project" value="EnsemblFungi"/>
</dbReference>
<dbReference type="GO" id="GO:0007076">
    <property type="term" value="P:mitotic chromosome condensation"/>
    <property type="evidence" value="ECO:0007669"/>
    <property type="project" value="EnsemblFungi"/>
</dbReference>
<dbReference type="GO" id="GO:0007088">
    <property type="term" value="P:regulation of mitotic nuclear division"/>
    <property type="evidence" value="ECO:0007669"/>
    <property type="project" value="EnsemblFungi"/>
</dbReference>
<dbReference type="GO" id="GO:0032200">
    <property type="term" value="P:telomere organization"/>
    <property type="evidence" value="ECO:0007669"/>
    <property type="project" value="EnsemblFungi"/>
</dbReference>
<dbReference type="GO" id="GO:0070058">
    <property type="term" value="P:tRNA gene clustering"/>
    <property type="evidence" value="ECO:0007669"/>
    <property type="project" value="EnsemblFungi"/>
</dbReference>
<dbReference type="CDD" id="cd04301">
    <property type="entry name" value="NAT_SF"/>
    <property type="match status" value="1"/>
</dbReference>
<dbReference type="Gene3D" id="3.40.630.30">
    <property type="match status" value="1"/>
</dbReference>
<dbReference type="InterPro" id="IPR028005">
    <property type="entry name" value="AcTrfase_ESCO_Znf_dom"/>
</dbReference>
<dbReference type="InterPro" id="IPR016181">
    <property type="entry name" value="Acyl_CoA_acyltransferase"/>
</dbReference>
<dbReference type="InterPro" id="IPR028009">
    <property type="entry name" value="ESCO_Acetyltransf_dom"/>
</dbReference>
<dbReference type="InterPro" id="IPR000182">
    <property type="entry name" value="GNAT_dom"/>
</dbReference>
<dbReference type="PANTHER" id="PTHR45884">
    <property type="entry name" value="N-ACETYLTRANSFERASE ECO"/>
    <property type="match status" value="1"/>
</dbReference>
<dbReference type="PANTHER" id="PTHR45884:SF2">
    <property type="entry name" value="N-ACETYLTRANSFERASE ECO"/>
    <property type="match status" value="1"/>
</dbReference>
<dbReference type="Pfam" id="PF13880">
    <property type="entry name" value="Acetyltransf_13"/>
    <property type="match status" value="1"/>
</dbReference>
<dbReference type="Pfam" id="PF13878">
    <property type="entry name" value="zf-C2H2_3"/>
    <property type="match status" value="1"/>
</dbReference>
<dbReference type="SUPFAM" id="SSF55729">
    <property type="entry name" value="Acyl-CoA N-acyltransferases (Nat)"/>
    <property type="match status" value="1"/>
</dbReference>
<dbReference type="PROSITE" id="PS51186">
    <property type="entry name" value="GNAT"/>
    <property type="match status" value="1"/>
</dbReference>
<comment type="function">
    <text evidence="1">Probable acetyltransferase required for the establishment of sister chromatid cohesion and couple the processes of cohesion and DNA replication to ensure that only sister chromatids become paired together. In contrast to the structural cohesins, the deposition and establishment factors are required only during S phase. Acts by acetylating the cohesin complex component SMC3 (By similarity).</text>
</comment>
<comment type="subcellular location">
    <subcellularLocation>
        <location evidence="1">Nucleus</location>
    </subcellularLocation>
</comment>
<comment type="similarity">
    <text evidence="3">Belongs to the acetyltransferase family. ECO subfamily.</text>
</comment>
<sequence>MAVNHVRSKSSNGKRLVQSKLNINNETILKCPKCEMKYSPNSIDDVATHKKYHDLHINGRNWSQTWGIPIHDTTSSTIIATPSSSPFKTGKSVNNKNNERIVMIQENKPAEVKAMLEIMDIVNQELNAPQDENNFWRKPNAEHQGKAIVYIKDKKVVGAITVEVLKQHKCRWMIYETRTLVEHVRPQFTLGISRIWVCRAQRGKGIAEKLLDAARISAIPGQNVDKMKLAWSQPSDSGGKLAKKYNGVKHKSGHILIPCYL</sequence>
<name>ECO1_CANGA</name>
<organism>
    <name type="scientific">Candida glabrata (strain ATCC 2001 / BCRC 20586 / JCM 3761 / NBRC 0622 / NRRL Y-65 / CBS 138)</name>
    <name type="common">Yeast</name>
    <name type="synonym">Nakaseomyces glabratus</name>
    <dbReference type="NCBI Taxonomy" id="284593"/>
    <lineage>
        <taxon>Eukaryota</taxon>
        <taxon>Fungi</taxon>
        <taxon>Dikarya</taxon>
        <taxon>Ascomycota</taxon>
        <taxon>Saccharomycotina</taxon>
        <taxon>Saccharomycetes</taxon>
        <taxon>Saccharomycetales</taxon>
        <taxon>Saccharomycetaceae</taxon>
        <taxon>Nakaseomyces</taxon>
    </lineage>
</organism>
<gene>
    <name type="primary">ECO1</name>
    <name type="ordered locus">CAGL0I09042g</name>
</gene>
<evidence type="ECO:0000250" key="1"/>
<evidence type="ECO:0000255" key="2">
    <source>
        <dbReference type="PROSITE-ProRule" id="PRU00532"/>
    </source>
</evidence>
<evidence type="ECO:0000305" key="3"/>
<accession>Q6FQ55</accession>
<feature type="chain" id="PRO_0000074546" description="N-acetyltransferase ECO1">
    <location>
        <begin position="1"/>
        <end position="261"/>
    </location>
</feature>
<feature type="domain" description="N-acetyltransferase" evidence="2">
    <location>
        <begin position="102"/>
        <end position="261"/>
    </location>
</feature>
<feature type="zinc finger region" description="CCHH-type">
    <location>
        <begin position="29"/>
        <end position="53"/>
    </location>
</feature>